<sequence>MNSMKYRDLRDFLTLLEHKGELKRISFEVDPYLEMTEIADRTLRAGGPALLFENPKGYSMPVLCNLFGTAERVAMGMGQKDVKALHDVGKLLAFLKEPDPPKGFRDLLDKLPKFKQVLNMPTKRLNTAPCQEHVSVGDDVDLTRIPIMHCWPEDAAPLITWGLTVTRGPNKERQNLGIYRQQVLGKNKLIMRWLSHRGGALDFQEWCQAHPGERFPVAVALGADPATILGAVTPIPDTLSEYAFAGLLRGYKTEVVKCLSNNLEVPASAEIVLEGYIEPGELAPEGPYGDHTGYYNEIDMFPVFTVTHITQRHDAIYHSTYTGRPPDEPAVLGVALNEVLVPILQKQFPEIVDFYLPPEGCSYRLAVVTMKKQYPGHAKRVMMGVWSYLRQFMYTKFVIVCDDDINARDWNDVIWAITTRMDPVRDTVLMENTPIDYLDFASPVSGLGSKMGMDATNKWLGETQREWGRPIVMSEEVRTRVDKIWDELDILGP</sequence>
<name>UBID_PHOLL</name>
<feature type="chain" id="PRO_0000267678" description="3-octaprenyl-4-hydroxybenzoate carboxy-lyase">
    <location>
        <begin position="1"/>
        <end position="493"/>
    </location>
</feature>
<feature type="active site" description="Proton donor" evidence="1">
    <location>
        <position position="290"/>
    </location>
</feature>
<feature type="binding site" evidence="1">
    <location>
        <position position="175"/>
    </location>
    <ligand>
        <name>Mn(2+)</name>
        <dbReference type="ChEBI" id="CHEBI:29035"/>
    </ligand>
</feature>
<feature type="binding site" evidence="1">
    <location>
        <begin position="178"/>
        <end position="180"/>
    </location>
    <ligand>
        <name>prenylated FMN</name>
        <dbReference type="ChEBI" id="CHEBI:87746"/>
    </ligand>
</feature>
<feature type="binding site" evidence="1">
    <location>
        <begin position="192"/>
        <end position="194"/>
    </location>
    <ligand>
        <name>prenylated FMN</name>
        <dbReference type="ChEBI" id="CHEBI:87746"/>
    </ligand>
</feature>
<feature type="binding site" evidence="1">
    <location>
        <begin position="197"/>
        <end position="198"/>
    </location>
    <ligand>
        <name>prenylated FMN</name>
        <dbReference type="ChEBI" id="CHEBI:87746"/>
    </ligand>
</feature>
<feature type="binding site" evidence="1">
    <location>
        <position position="241"/>
    </location>
    <ligand>
        <name>Mn(2+)</name>
        <dbReference type="ChEBI" id="CHEBI:29035"/>
    </ligand>
</feature>
<reference key="1">
    <citation type="journal article" date="2003" name="Nat. Biotechnol.">
        <title>The genome sequence of the entomopathogenic bacterium Photorhabdus luminescens.</title>
        <authorList>
            <person name="Duchaud E."/>
            <person name="Rusniok C."/>
            <person name="Frangeul L."/>
            <person name="Buchrieser C."/>
            <person name="Givaudan A."/>
            <person name="Taourit S."/>
            <person name="Bocs S."/>
            <person name="Boursaux-Eude C."/>
            <person name="Chandler M."/>
            <person name="Charles J.-F."/>
            <person name="Dassa E."/>
            <person name="Derose R."/>
            <person name="Derzelle S."/>
            <person name="Freyssinet G."/>
            <person name="Gaudriault S."/>
            <person name="Medigue C."/>
            <person name="Lanois A."/>
            <person name="Powell K."/>
            <person name="Siguier P."/>
            <person name="Vincent R."/>
            <person name="Wingate V."/>
            <person name="Zouine M."/>
            <person name="Glaser P."/>
            <person name="Boemare N."/>
            <person name="Danchin A."/>
            <person name="Kunst F."/>
        </authorList>
    </citation>
    <scope>NUCLEOTIDE SEQUENCE [LARGE SCALE GENOMIC DNA]</scope>
    <source>
        <strain>DSM 15139 / CIP 105565 / TT01</strain>
    </source>
</reference>
<dbReference type="EC" id="4.1.1.98" evidence="1"/>
<dbReference type="EMBL" id="BX571873">
    <property type="protein sequence ID" value="CAE16777.1"/>
    <property type="molecule type" value="Genomic_DNA"/>
</dbReference>
<dbReference type="SMR" id="Q7MZ89"/>
<dbReference type="STRING" id="243265.plu4405"/>
<dbReference type="KEGG" id="plu:plu4405"/>
<dbReference type="eggNOG" id="COG0043">
    <property type="taxonomic scope" value="Bacteria"/>
</dbReference>
<dbReference type="HOGENOM" id="CLU_023348_4_1_6"/>
<dbReference type="UniPathway" id="UPA00232"/>
<dbReference type="Proteomes" id="UP000002514">
    <property type="component" value="Chromosome"/>
</dbReference>
<dbReference type="GO" id="GO:0005829">
    <property type="term" value="C:cytosol"/>
    <property type="evidence" value="ECO:0007669"/>
    <property type="project" value="TreeGrafter"/>
</dbReference>
<dbReference type="GO" id="GO:0005886">
    <property type="term" value="C:plasma membrane"/>
    <property type="evidence" value="ECO:0007669"/>
    <property type="project" value="UniProtKB-SubCell"/>
</dbReference>
<dbReference type="GO" id="GO:0008694">
    <property type="term" value="F:3-octaprenyl-4-hydroxybenzoate carboxy-lyase activity"/>
    <property type="evidence" value="ECO:0007669"/>
    <property type="project" value="UniProtKB-UniRule"/>
</dbReference>
<dbReference type="GO" id="GO:0046872">
    <property type="term" value="F:metal ion binding"/>
    <property type="evidence" value="ECO:0007669"/>
    <property type="project" value="UniProtKB-KW"/>
</dbReference>
<dbReference type="GO" id="GO:0006744">
    <property type="term" value="P:ubiquinone biosynthetic process"/>
    <property type="evidence" value="ECO:0007669"/>
    <property type="project" value="UniProtKB-UniRule"/>
</dbReference>
<dbReference type="FunFam" id="1.20.5.570:FF:000001">
    <property type="entry name" value="3-octaprenyl-4-hydroxybenzoate carboxy-lyase"/>
    <property type="match status" value="1"/>
</dbReference>
<dbReference type="FunFam" id="3.40.1670.10:FF:000001">
    <property type="entry name" value="3-octaprenyl-4-hydroxybenzoate carboxy-lyase"/>
    <property type="match status" value="1"/>
</dbReference>
<dbReference type="Gene3D" id="1.20.5.570">
    <property type="entry name" value="Single helix bin"/>
    <property type="match status" value="1"/>
</dbReference>
<dbReference type="Gene3D" id="3.40.1670.10">
    <property type="entry name" value="UbiD C-terminal domain-like"/>
    <property type="match status" value="1"/>
</dbReference>
<dbReference type="HAMAP" id="MF_01636">
    <property type="entry name" value="UbiD"/>
    <property type="match status" value="1"/>
</dbReference>
<dbReference type="InterPro" id="IPR002830">
    <property type="entry name" value="UbiD"/>
</dbReference>
<dbReference type="InterPro" id="IPR049381">
    <property type="entry name" value="UbiD-like_C"/>
</dbReference>
<dbReference type="InterPro" id="IPR049383">
    <property type="entry name" value="UbiD-like_N"/>
</dbReference>
<dbReference type="InterPro" id="IPR023677">
    <property type="entry name" value="UbiD_bacteria"/>
</dbReference>
<dbReference type="InterPro" id="IPR048304">
    <property type="entry name" value="UbiD_Rift_dom"/>
</dbReference>
<dbReference type="NCBIfam" id="NF008175">
    <property type="entry name" value="PRK10922.1"/>
    <property type="match status" value="1"/>
</dbReference>
<dbReference type="NCBIfam" id="TIGR00148">
    <property type="entry name" value="UbiD family decarboxylase"/>
    <property type="match status" value="1"/>
</dbReference>
<dbReference type="PANTHER" id="PTHR30108">
    <property type="entry name" value="3-OCTAPRENYL-4-HYDROXYBENZOATE CARBOXY-LYASE-RELATED"/>
    <property type="match status" value="1"/>
</dbReference>
<dbReference type="PANTHER" id="PTHR30108:SF17">
    <property type="entry name" value="FERULIC ACID DECARBOXYLASE 1"/>
    <property type="match status" value="1"/>
</dbReference>
<dbReference type="Pfam" id="PF01977">
    <property type="entry name" value="UbiD"/>
    <property type="match status" value="1"/>
</dbReference>
<dbReference type="Pfam" id="PF20696">
    <property type="entry name" value="UbiD_C"/>
    <property type="match status" value="1"/>
</dbReference>
<dbReference type="Pfam" id="PF20695">
    <property type="entry name" value="UbiD_N"/>
    <property type="match status" value="1"/>
</dbReference>
<dbReference type="SUPFAM" id="SSF50475">
    <property type="entry name" value="FMN-binding split barrel"/>
    <property type="match status" value="1"/>
</dbReference>
<dbReference type="SUPFAM" id="SSF143968">
    <property type="entry name" value="UbiD C-terminal domain-like"/>
    <property type="match status" value="1"/>
</dbReference>
<comment type="function">
    <text evidence="1">Catalyzes the decarboxylation of 3-octaprenyl-4-hydroxy benzoate to 2-octaprenylphenol, an intermediate step in ubiquinone biosynthesis.</text>
</comment>
<comment type="catalytic activity">
    <reaction evidence="1">
        <text>a 4-hydroxy-3-(all-trans-polyprenyl)benzoate + H(+) = a 2-(all-trans-polyprenyl)phenol + CO2</text>
        <dbReference type="Rhea" id="RHEA:41680"/>
        <dbReference type="Rhea" id="RHEA-COMP:9514"/>
        <dbReference type="Rhea" id="RHEA-COMP:9516"/>
        <dbReference type="ChEBI" id="CHEBI:1269"/>
        <dbReference type="ChEBI" id="CHEBI:15378"/>
        <dbReference type="ChEBI" id="CHEBI:16526"/>
        <dbReference type="ChEBI" id="CHEBI:78396"/>
        <dbReference type="EC" id="4.1.1.98"/>
    </reaction>
</comment>
<comment type="cofactor">
    <cofactor evidence="1">
        <name>prenylated FMN</name>
        <dbReference type="ChEBI" id="CHEBI:87746"/>
    </cofactor>
    <text evidence="1">Binds 1 prenylated FMN per subunit.</text>
</comment>
<comment type="cofactor">
    <cofactor evidence="1">
        <name>Mn(2+)</name>
        <dbReference type="ChEBI" id="CHEBI:29035"/>
    </cofactor>
</comment>
<comment type="pathway">
    <text evidence="1">Cofactor biosynthesis; ubiquinone biosynthesis.</text>
</comment>
<comment type="subunit">
    <text evidence="1">Homohexamer.</text>
</comment>
<comment type="subcellular location">
    <subcellularLocation>
        <location evidence="1">Cell membrane</location>
        <topology evidence="1">Peripheral membrane protein</topology>
    </subcellularLocation>
</comment>
<comment type="similarity">
    <text evidence="1">Belongs to the UbiD family.</text>
</comment>
<evidence type="ECO:0000255" key="1">
    <source>
        <dbReference type="HAMAP-Rule" id="MF_01636"/>
    </source>
</evidence>
<protein>
    <recommendedName>
        <fullName evidence="1">3-octaprenyl-4-hydroxybenzoate carboxy-lyase</fullName>
        <ecNumber evidence="1">4.1.1.98</ecNumber>
    </recommendedName>
    <alternativeName>
        <fullName evidence="1">Polyprenyl p-hydroxybenzoate decarboxylase</fullName>
    </alternativeName>
</protein>
<organism>
    <name type="scientific">Photorhabdus laumondii subsp. laumondii (strain DSM 15139 / CIP 105565 / TT01)</name>
    <name type="common">Photorhabdus luminescens subsp. laumondii</name>
    <dbReference type="NCBI Taxonomy" id="243265"/>
    <lineage>
        <taxon>Bacteria</taxon>
        <taxon>Pseudomonadati</taxon>
        <taxon>Pseudomonadota</taxon>
        <taxon>Gammaproteobacteria</taxon>
        <taxon>Enterobacterales</taxon>
        <taxon>Morganellaceae</taxon>
        <taxon>Photorhabdus</taxon>
    </lineage>
</organism>
<keyword id="KW-1003">Cell membrane</keyword>
<keyword id="KW-0210">Decarboxylase</keyword>
<keyword id="KW-0285">Flavoprotein</keyword>
<keyword id="KW-0288">FMN</keyword>
<keyword id="KW-0456">Lyase</keyword>
<keyword id="KW-0464">Manganese</keyword>
<keyword id="KW-0472">Membrane</keyword>
<keyword id="KW-0479">Metal-binding</keyword>
<keyword id="KW-1185">Reference proteome</keyword>
<keyword id="KW-0831">Ubiquinone biosynthesis</keyword>
<accession>Q7MZ89</accession>
<gene>
    <name evidence="1" type="primary">ubiD</name>
    <name type="ordered locus">plu4405</name>
</gene>
<proteinExistence type="inferred from homology"/>